<accession>A8GUF3</accession>
<evidence type="ECO:0000255" key="1">
    <source>
        <dbReference type="HAMAP-Rule" id="MF_00379"/>
    </source>
</evidence>
<comment type="function">
    <text evidence="1">Exhibits a very high intrinsic GTPase hydrolysis rate. Involved in the addition of a carboxymethylaminomethyl (cmnm) group at the wobble position (U34) of certain tRNAs, forming tRNA-cmnm(5)s(2)U34.</text>
</comment>
<comment type="cofactor">
    <cofactor evidence="1">
        <name>K(+)</name>
        <dbReference type="ChEBI" id="CHEBI:29103"/>
    </cofactor>
    <text evidence="1">Binds 1 potassium ion per subunit.</text>
</comment>
<comment type="subunit">
    <text evidence="1">Homodimer. Heterotetramer of two MnmE and two MnmG subunits.</text>
</comment>
<comment type="subcellular location">
    <subcellularLocation>
        <location evidence="1">Cytoplasm</location>
    </subcellularLocation>
</comment>
<comment type="similarity">
    <text evidence="1">Belongs to the TRAFAC class TrmE-Era-EngA-EngB-Septin-like GTPase superfamily. TrmE GTPase family.</text>
</comment>
<feature type="chain" id="PRO_1000048865" description="tRNA modification GTPase MnmE">
    <location>
        <begin position="1"/>
        <end position="445"/>
    </location>
</feature>
<feature type="domain" description="TrmE-type G">
    <location>
        <begin position="215"/>
        <end position="371"/>
    </location>
</feature>
<feature type="binding site" evidence="1">
    <location>
        <position position="20"/>
    </location>
    <ligand>
        <name>(6S)-5-formyl-5,6,7,8-tetrahydrofolate</name>
        <dbReference type="ChEBI" id="CHEBI:57457"/>
    </ligand>
</feature>
<feature type="binding site" evidence="1">
    <location>
        <position position="79"/>
    </location>
    <ligand>
        <name>(6S)-5-formyl-5,6,7,8-tetrahydrofolate</name>
        <dbReference type="ChEBI" id="CHEBI:57457"/>
    </ligand>
</feature>
<feature type="binding site" evidence="1">
    <location>
        <position position="119"/>
    </location>
    <ligand>
        <name>(6S)-5-formyl-5,6,7,8-tetrahydrofolate</name>
        <dbReference type="ChEBI" id="CHEBI:57457"/>
    </ligand>
</feature>
<feature type="binding site" evidence="1">
    <location>
        <begin position="225"/>
        <end position="230"/>
    </location>
    <ligand>
        <name>GTP</name>
        <dbReference type="ChEBI" id="CHEBI:37565"/>
    </ligand>
</feature>
<feature type="binding site" evidence="1">
    <location>
        <position position="225"/>
    </location>
    <ligand>
        <name>K(+)</name>
        <dbReference type="ChEBI" id="CHEBI:29103"/>
    </ligand>
</feature>
<feature type="binding site" evidence="1">
    <location>
        <position position="229"/>
    </location>
    <ligand>
        <name>Mg(2+)</name>
        <dbReference type="ChEBI" id="CHEBI:18420"/>
    </ligand>
</feature>
<feature type="binding site" evidence="1">
    <location>
        <begin position="244"/>
        <end position="250"/>
    </location>
    <ligand>
        <name>GTP</name>
        <dbReference type="ChEBI" id="CHEBI:37565"/>
    </ligand>
</feature>
<feature type="binding site" evidence="1">
    <location>
        <position position="244"/>
    </location>
    <ligand>
        <name>K(+)</name>
        <dbReference type="ChEBI" id="CHEBI:29103"/>
    </ligand>
</feature>
<feature type="binding site" evidence="1">
    <location>
        <position position="246"/>
    </location>
    <ligand>
        <name>K(+)</name>
        <dbReference type="ChEBI" id="CHEBI:29103"/>
    </ligand>
</feature>
<feature type="binding site" evidence="1">
    <location>
        <position position="249"/>
    </location>
    <ligand>
        <name>K(+)</name>
        <dbReference type="ChEBI" id="CHEBI:29103"/>
    </ligand>
</feature>
<feature type="binding site" evidence="1">
    <location>
        <position position="250"/>
    </location>
    <ligand>
        <name>Mg(2+)</name>
        <dbReference type="ChEBI" id="CHEBI:18420"/>
    </ligand>
</feature>
<feature type="binding site" evidence="1">
    <location>
        <begin position="269"/>
        <end position="272"/>
    </location>
    <ligand>
        <name>GTP</name>
        <dbReference type="ChEBI" id="CHEBI:37565"/>
    </ligand>
</feature>
<feature type="binding site" evidence="1">
    <location>
        <position position="445"/>
    </location>
    <ligand>
        <name>(6S)-5-formyl-5,6,7,8-tetrahydrofolate</name>
        <dbReference type="ChEBI" id="CHEBI:57457"/>
    </ligand>
</feature>
<gene>
    <name evidence="1" type="primary">mnmE</name>
    <name evidence="1" type="synonym">trmE</name>
    <name type="ordered locus">A1I_00195</name>
</gene>
<name>MNME_RICB8</name>
<proteinExistence type="inferred from homology"/>
<organism>
    <name type="scientific">Rickettsia bellii (strain OSU 85-389)</name>
    <dbReference type="NCBI Taxonomy" id="391896"/>
    <lineage>
        <taxon>Bacteria</taxon>
        <taxon>Pseudomonadati</taxon>
        <taxon>Pseudomonadota</taxon>
        <taxon>Alphaproteobacteria</taxon>
        <taxon>Rickettsiales</taxon>
        <taxon>Rickettsiaceae</taxon>
        <taxon>Rickettsieae</taxon>
        <taxon>Rickettsia</taxon>
        <taxon>belli group</taxon>
    </lineage>
</organism>
<protein>
    <recommendedName>
        <fullName evidence="1">tRNA modification GTPase MnmE</fullName>
        <ecNumber evidence="1">3.6.-.-</ecNumber>
    </recommendedName>
</protein>
<sequence>METIFAQSSSFGKAGVAVFRVSGTKSLEVLKLLTGKSNFKPRFMYYQKLTSPESNDLIDNAMVVYFKAPNSFTGEDVVEIHTHGSKAISIMLTNALLNIPGVRLAEAGEFTKRAFLNNKFDLTAAEGIADLINAETIMQHKQAIRQAGGALEELYNSWRSQLLRIISLLEAYIDFPDEDIPESVLKDVTNTHKTLINTISEYLNDNRKGELLRSGLKLAIIGPPNAGKSSLLNFLMRRDIAIVSNIAGTTRDIIEGHLDIGGYPIILQDTAGIRGESNDVIEQEGIKRAIDSAKKADIKIVMFDAETLDSAVNEDITGLIDENTIVIINKIDLIPENRIFNIENKYRCLKVSIKNNIALPSILKNIEEIAENMAGFTETPYITNERHRHHLKQALVYLKDFNLDNDLVLATEDIRMTMHRIGAITGIIDVEEILGEIFKNFCIGK</sequence>
<reference key="1">
    <citation type="submission" date="2007-09" db="EMBL/GenBank/DDBJ databases">
        <title>Complete genome sequencing of Rickettsia bellii.</title>
        <authorList>
            <person name="Madan A."/>
            <person name="Lee H."/>
            <person name="Madan A."/>
            <person name="Yoon J.-G."/>
            <person name="Ryu G.-Y."/>
            <person name="Dasch G."/>
            <person name="Ereemeva M."/>
        </authorList>
    </citation>
    <scope>NUCLEOTIDE SEQUENCE [LARGE SCALE GENOMIC DNA]</scope>
    <source>
        <strain>OSU 85-389</strain>
    </source>
</reference>
<keyword id="KW-0963">Cytoplasm</keyword>
<keyword id="KW-0342">GTP-binding</keyword>
<keyword id="KW-0378">Hydrolase</keyword>
<keyword id="KW-0460">Magnesium</keyword>
<keyword id="KW-0479">Metal-binding</keyword>
<keyword id="KW-0547">Nucleotide-binding</keyword>
<keyword id="KW-0630">Potassium</keyword>
<keyword id="KW-0819">tRNA processing</keyword>
<dbReference type="EC" id="3.6.-.-" evidence="1"/>
<dbReference type="EMBL" id="CP000849">
    <property type="protein sequence ID" value="ABV78449.1"/>
    <property type="molecule type" value="Genomic_DNA"/>
</dbReference>
<dbReference type="RefSeq" id="WP_012151495.1">
    <property type="nucleotide sequence ID" value="NC_009883.1"/>
</dbReference>
<dbReference type="SMR" id="A8GUF3"/>
<dbReference type="KEGG" id="rbo:A1I_00195"/>
<dbReference type="HOGENOM" id="CLU_019624_3_1_5"/>
<dbReference type="GO" id="GO:0005737">
    <property type="term" value="C:cytoplasm"/>
    <property type="evidence" value="ECO:0007669"/>
    <property type="project" value="UniProtKB-SubCell"/>
</dbReference>
<dbReference type="GO" id="GO:0005525">
    <property type="term" value="F:GTP binding"/>
    <property type="evidence" value="ECO:0007669"/>
    <property type="project" value="UniProtKB-UniRule"/>
</dbReference>
<dbReference type="GO" id="GO:0003924">
    <property type="term" value="F:GTPase activity"/>
    <property type="evidence" value="ECO:0007669"/>
    <property type="project" value="UniProtKB-UniRule"/>
</dbReference>
<dbReference type="GO" id="GO:0046872">
    <property type="term" value="F:metal ion binding"/>
    <property type="evidence" value="ECO:0007669"/>
    <property type="project" value="UniProtKB-KW"/>
</dbReference>
<dbReference type="GO" id="GO:0030488">
    <property type="term" value="P:tRNA methylation"/>
    <property type="evidence" value="ECO:0007669"/>
    <property type="project" value="TreeGrafter"/>
</dbReference>
<dbReference type="GO" id="GO:0002098">
    <property type="term" value="P:tRNA wobble uridine modification"/>
    <property type="evidence" value="ECO:0007669"/>
    <property type="project" value="TreeGrafter"/>
</dbReference>
<dbReference type="CDD" id="cd04164">
    <property type="entry name" value="trmE"/>
    <property type="match status" value="1"/>
</dbReference>
<dbReference type="CDD" id="cd14858">
    <property type="entry name" value="TrmE_N"/>
    <property type="match status" value="1"/>
</dbReference>
<dbReference type="FunFam" id="3.30.1360.120:FF:000007">
    <property type="entry name" value="tRNA modification GTPase GTPBP3, mitochondrial"/>
    <property type="match status" value="1"/>
</dbReference>
<dbReference type="Gene3D" id="3.40.50.300">
    <property type="entry name" value="P-loop containing nucleotide triphosphate hydrolases"/>
    <property type="match status" value="1"/>
</dbReference>
<dbReference type="Gene3D" id="3.30.1360.120">
    <property type="entry name" value="Probable tRNA modification gtpase trme, domain 1"/>
    <property type="match status" value="1"/>
</dbReference>
<dbReference type="Gene3D" id="1.20.120.430">
    <property type="entry name" value="tRNA modification GTPase MnmE domain 2"/>
    <property type="match status" value="1"/>
</dbReference>
<dbReference type="HAMAP" id="MF_00379">
    <property type="entry name" value="GTPase_MnmE"/>
    <property type="match status" value="1"/>
</dbReference>
<dbReference type="InterPro" id="IPR031168">
    <property type="entry name" value="G_TrmE"/>
</dbReference>
<dbReference type="InterPro" id="IPR006073">
    <property type="entry name" value="GTP-bd"/>
</dbReference>
<dbReference type="InterPro" id="IPR018948">
    <property type="entry name" value="GTP-bd_TrmE_N"/>
</dbReference>
<dbReference type="InterPro" id="IPR004520">
    <property type="entry name" value="GTPase_MnmE"/>
</dbReference>
<dbReference type="InterPro" id="IPR027368">
    <property type="entry name" value="MnmE_dom2"/>
</dbReference>
<dbReference type="InterPro" id="IPR025867">
    <property type="entry name" value="MnmE_helical"/>
</dbReference>
<dbReference type="InterPro" id="IPR027417">
    <property type="entry name" value="P-loop_NTPase"/>
</dbReference>
<dbReference type="InterPro" id="IPR005225">
    <property type="entry name" value="Small_GTP-bd"/>
</dbReference>
<dbReference type="InterPro" id="IPR027266">
    <property type="entry name" value="TrmE/GcvT_dom1"/>
</dbReference>
<dbReference type="NCBIfam" id="TIGR00450">
    <property type="entry name" value="mnmE_trmE_thdF"/>
    <property type="match status" value="1"/>
</dbReference>
<dbReference type="NCBIfam" id="NF003661">
    <property type="entry name" value="PRK05291.1-3"/>
    <property type="match status" value="1"/>
</dbReference>
<dbReference type="NCBIfam" id="TIGR00231">
    <property type="entry name" value="small_GTP"/>
    <property type="match status" value="1"/>
</dbReference>
<dbReference type="PANTHER" id="PTHR42714">
    <property type="entry name" value="TRNA MODIFICATION GTPASE GTPBP3"/>
    <property type="match status" value="1"/>
</dbReference>
<dbReference type="PANTHER" id="PTHR42714:SF2">
    <property type="entry name" value="TRNA MODIFICATION GTPASE GTPBP3, MITOCHONDRIAL"/>
    <property type="match status" value="1"/>
</dbReference>
<dbReference type="Pfam" id="PF01926">
    <property type="entry name" value="MMR_HSR1"/>
    <property type="match status" value="1"/>
</dbReference>
<dbReference type="Pfam" id="PF12631">
    <property type="entry name" value="MnmE_helical"/>
    <property type="match status" value="1"/>
</dbReference>
<dbReference type="Pfam" id="PF10396">
    <property type="entry name" value="TrmE_N"/>
    <property type="match status" value="1"/>
</dbReference>
<dbReference type="SUPFAM" id="SSF52540">
    <property type="entry name" value="P-loop containing nucleoside triphosphate hydrolases"/>
    <property type="match status" value="1"/>
</dbReference>
<dbReference type="SUPFAM" id="SSF116878">
    <property type="entry name" value="TrmE connector domain"/>
    <property type="match status" value="1"/>
</dbReference>
<dbReference type="PROSITE" id="PS51709">
    <property type="entry name" value="G_TRME"/>
    <property type="match status" value="1"/>
</dbReference>